<reference key="1">
    <citation type="journal article" date="2000" name="Nature">
        <title>Sequence and analysis of chromosome 1 of the plant Arabidopsis thaliana.</title>
        <authorList>
            <person name="Theologis A."/>
            <person name="Ecker J.R."/>
            <person name="Palm C.J."/>
            <person name="Federspiel N.A."/>
            <person name="Kaul S."/>
            <person name="White O."/>
            <person name="Alonso J."/>
            <person name="Altafi H."/>
            <person name="Araujo R."/>
            <person name="Bowman C.L."/>
            <person name="Brooks S.Y."/>
            <person name="Buehler E."/>
            <person name="Chan A."/>
            <person name="Chao Q."/>
            <person name="Chen H."/>
            <person name="Cheuk R.F."/>
            <person name="Chin C.W."/>
            <person name="Chung M.K."/>
            <person name="Conn L."/>
            <person name="Conway A.B."/>
            <person name="Conway A.R."/>
            <person name="Creasy T.H."/>
            <person name="Dewar K."/>
            <person name="Dunn P."/>
            <person name="Etgu P."/>
            <person name="Feldblyum T.V."/>
            <person name="Feng J.-D."/>
            <person name="Fong B."/>
            <person name="Fujii C.Y."/>
            <person name="Gill J.E."/>
            <person name="Goldsmith A.D."/>
            <person name="Haas B."/>
            <person name="Hansen N.F."/>
            <person name="Hughes B."/>
            <person name="Huizar L."/>
            <person name="Hunter J.L."/>
            <person name="Jenkins J."/>
            <person name="Johnson-Hopson C."/>
            <person name="Khan S."/>
            <person name="Khaykin E."/>
            <person name="Kim C.J."/>
            <person name="Koo H.L."/>
            <person name="Kremenetskaia I."/>
            <person name="Kurtz D.B."/>
            <person name="Kwan A."/>
            <person name="Lam B."/>
            <person name="Langin-Hooper S."/>
            <person name="Lee A."/>
            <person name="Lee J.M."/>
            <person name="Lenz C.A."/>
            <person name="Li J.H."/>
            <person name="Li Y.-P."/>
            <person name="Lin X."/>
            <person name="Liu S.X."/>
            <person name="Liu Z.A."/>
            <person name="Luros J.S."/>
            <person name="Maiti R."/>
            <person name="Marziali A."/>
            <person name="Militscher J."/>
            <person name="Miranda M."/>
            <person name="Nguyen M."/>
            <person name="Nierman W.C."/>
            <person name="Osborne B.I."/>
            <person name="Pai G."/>
            <person name="Peterson J."/>
            <person name="Pham P.K."/>
            <person name="Rizzo M."/>
            <person name="Rooney T."/>
            <person name="Rowley D."/>
            <person name="Sakano H."/>
            <person name="Salzberg S.L."/>
            <person name="Schwartz J.R."/>
            <person name="Shinn P."/>
            <person name="Southwick A.M."/>
            <person name="Sun H."/>
            <person name="Tallon L.J."/>
            <person name="Tambunga G."/>
            <person name="Toriumi M.J."/>
            <person name="Town C.D."/>
            <person name="Utterback T."/>
            <person name="Van Aken S."/>
            <person name="Vaysberg M."/>
            <person name="Vysotskaia V.S."/>
            <person name="Walker M."/>
            <person name="Wu D."/>
            <person name="Yu G."/>
            <person name="Fraser C.M."/>
            <person name="Venter J.C."/>
            <person name="Davis R.W."/>
        </authorList>
    </citation>
    <scope>NUCLEOTIDE SEQUENCE [LARGE SCALE GENOMIC DNA]</scope>
    <source>
        <strain>cv. Columbia</strain>
    </source>
</reference>
<reference key="2">
    <citation type="journal article" date="2017" name="Plant J.">
        <title>Araport11: a complete reannotation of the Arabidopsis thaliana reference genome.</title>
        <authorList>
            <person name="Cheng C.Y."/>
            <person name="Krishnakumar V."/>
            <person name="Chan A.P."/>
            <person name="Thibaud-Nissen F."/>
            <person name="Schobel S."/>
            <person name="Town C.D."/>
        </authorList>
    </citation>
    <scope>GENOME REANNOTATION</scope>
    <source>
        <strain>cv. Columbia</strain>
    </source>
</reference>
<reference key="3">
    <citation type="journal article" date="2010" name="Metallomics">
        <title>Metallochaperone-like genes in Arabidopsis thaliana.</title>
        <authorList>
            <person name="Tehseen M."/>
            <person name="Cairns N."/>
            <person name="Sherson S."/>
            <person name="Cobbett C.S."/>
        </authorList>
    </citation>
    <scope>GENE FAMILY</scope>
    <scope>NOMENCLATURE</scope>
</reference>
<reference key="4">
    <citation type="journal article" date="2013" name="FEBS J.">
        <title>Heavy metal-associated isoprenylated plant protein (HIPP): characterization of a family of proteins exclusive to plants.</title>
        <authorList>
            <person name="de Abreu-Neto J.B."/>
            <person name="Turchetto-Zolet A.C."/>
            <person name="de Oliveira L.F."/>
            <person name="Zanettini M.H."/>
            <person name="Margis-Pinheiro M."/>
        </authorList>
    </citation>
    <scope>GENE FAMILY</scope>
    <scope>NOMENCLATURE</scope>
</reference>
<feature type="chain" id="PRO_0000437823" description="Heavy metal-associated isoprenylated plant protein 17">
    <location>
        <begin position="1"/>
        <end position="261"/>
    </location>
</feature>
<feature type="propeptide" id="PRO_0000437824" description="Removed in mature form" evidence="7">
    <location>
        <begin position="262"/>
        <end position="264"/>
    </location>
</feature>
<feature type="domain" description="HMA 1" evidence="4">
    <location>
        <begin position="32"/>
        <end position="95"/>
    </location>
</feature>
<feature type="domain" description="HMA 2" evidence="4">
    <location>
        <begin position="133"/>
        <end position="204"/>
    </location>
</feature>
<feature type="coiled-coil region" evidence="3">
    <location>
        <begin position="185"/>
        <end position="218"/>
    </location>
</feature>
<feature type="modified residue" description="Cysteine methyl ester" evidence="2">
    <location>
        <position position="261"/>
    </location>
</feature>
<feature type="lipid moiety-binding region" description="S-farnesyl cysteine" evidence="2">
    <location>
        <position position="261"/>
    </location>
</feature>
<dbReference type="EMBL" id="AC079732">
    <property type="protein sequence ID" value="AAG29232.1"/>
    <property type="molecule type" value="Genomic_DNA"/>
</dbReference>
<dbReference type="EMBL" id="CP002684">
    <property type="protein sequence ID" value="AEE33466.1"/>
    <property type="molecule type" value="Genomic_DNA"/>
</dbReference>
<dbReference type="PIR" id="B96612">
    <property type="entry name" value="B96612"/>
</dbReference>
<dbReference type="RefSeq" id="NP_176089.1">
    <property type="nucleotide sequence ID" value="NM_104573.2"/>
</dbReference>
<dbReference type="SMR" id="Q9FVS0"/>
<dbReference type="FunCoup" id="Q9FVS0">
    <property type="interactions" value="50"/>
</dbReference>
<dbReference type="STRING" id="3702.Q9FVS0"/>
<dbReference type="PaxDb" id="3702-AT1G57780.1"/>
<dbReference type="EnsemblPlants" id="AT1G57780.1">
    <property type="protein sequence ID" value="AT1G57780.1"/>
    <property type="gene ID" value="AT1G57780"/>
</dbReference>
<dbReference type="GeneID" id="842153"/>
<dbReference type="Gramene" id="AT1G57780.1">
    <property type="protein sequence ID" value="AT1G57780.1"/>
    <property type="gene ID" value="AT1G57780"/>
</dbReference>
<dbReference type="KEGG" id="ath:AT1G57780"/>
<dbReference type="Araport" id="AT1G57780"/>
<dbReference type="TAIR" id="AT1G57780"/>
<dbReference type="eggNOG" id="KOG1603">
    <property type="taxonomic scope" value="Eukaryota"/>
</dbReference>
<dbReference type="HOGENOM" id="CLU_039886_3_1_1"/>
<dbReference type="InParanoid" id="Q9FVS0"/>
<dbReference type="OMA" id="PETSIME"/>
<dbReference type="PhylomeDB" id="Q9FVS0"/>
<dbReference type="PRO" id="PR:Q9FVS0"/>
<dbReference type="Proteomes" id="UP000006548">
    <property type="component" value="Chromosome 1"/>
</dbReference>
<dbReference type="ExpressionAtlas" id="Q9FVS0">
    <property type="expression patterns" value="baseline and differential"/>
</dbReference>
<dbReference type="GO" id="GO:0046872">
    <property type="term" value="F:metal ion binding"/>
    <property type="evidence" value="ECO:0007669"/>
    <property type="project" value="UniProtKB-KW"/>
</dbReference>
<dbReference type="Gene3D" id="3.30.70.100">
    <property type="match status" value="2"/>
</dbReference>
<dbReference type="InterPro" id="IPR044577">
    <property type="entry name" value="HIPP4/7/8/17/18/19"/>
</dbReference>
<dbReference type="InterPro" id="IPR006121">
    <property type="entry name" value="HMA_dom"/>
</dbReference>
<dbReference type="PANTHER" id="PTHR46195:SF30">
    <property type="entry name" value="HEAVY METAL-ASSOCIATED ISOPRENYLATED PLANT PROTEIN 17-RELATED"/>
    <property type="match status" value="1"/>
</dbReference>
<dbReference type="PANTHER" id="PTHR46195">
    <property type="entry name" value="HEAVY METAL-ASSOCIATED ISOPRENYLATED PLANT PROTEIN 7"/>
    <property type="match status" value="1"/>
</dbReference>
<dbReference type="Pfam" id="PF00403">
    <property type="entry name" value="HMA"/>
    <property type="match status" value="1"/>
</dbReference>
<dbReference type="PROSITE" id="PS50846">
    <property type="entry name" value="HMA_2"/>
    <property type="match status" value="2"/>
</dbReference>
<sequence>MGCWLKQPQGITTMMGCWLTKSRENILDNVIVTDAKLKISMNFEDCAKKIRKVACQFEVKSCITDIDDQKVLVSGDFNLHKLVKTLKKKTGKKIEIVTKNEKSSEDKVDDTVQNEDSKDEIVPQNADKPETSIMEVEFDIPFLCEKYEKDFGKVISKCTGVETYVVDLENKKVVVIGNFDKDELSRKLNKKMHQKIKKAEKERQEWESEMMLREAEEEKRLADIYEEIDKDRNVSLNPITDYEKEMAKHYYMFSDENPNACSIS</sequence>
<organism>
    <name type="scientific">Arabidopsis thaliana</name>
    <name type="common">Mouse-ear cress</name>
    <dbReference type="NCBI Taxonomy" id="3702"/>
    <lineage>
        <taxon>Eukaryota</taxon>
        <taxon>Viridiplantae</taxon>
        <taxon>Streptophyta</taxon>
        <taxon>Embryophyta</taxon>
        <taxon>Tracheophyta</taxon>
        <taxon>Spermatophyta</taxon>
        <taxon>Magnoliopsida</taxon>
        <taxon>eudicotyledons</taxon>
        <taxon>Gunneridae</taxon>
        <taxon>Pentapetalae</taxon>
        <taxon>rosids</taxon>
        <taxon>malvids</taxon>
        <taxon>Brassicales</taxon>
        <taxon>Brassicaceae</taxon>
        <taxon>Camelineae</taxon>
        <taxon>Arabidopsis</taxon>
    </lineage>
</organism>
<protein>
    <recommendedName>
        <fullName evidence="5 6">Heavy metal-associated isoprenylated plant protein 17</fullName>
        <shortName evidence="5 6">AtHIP17</shortName>
    </recommendedName>
</protein>
<gene>
    <name evidence="5 6" type="primary">HIPP17</name>
    <name evidence="9" type="ordered locus">At1g57780</name>
    <name evidence="10" type="ORF">F12K22.17</name>
</gene>
<proteinExistence type="inferred from homology"/>
<comment type="function">
    <text evidence="1">Probable heavy-metal-binding protein.</text>
</comment>
<comment type="similarity">
    <text evidence="7">Belongs to the HIPP family.</text>
</comment>
<comment type="caution">
    <text evidence="8">The HMA domain lacks the core conserved Cys-X-X-Cys motif.</text>
</comment>
<keyword id="KW-0175">Coiled coil</keyword>
<keyword id="KW-0449">Lipoprotein</keyword>
<keyword id="KW-0479">Metal-binding</keyword>
<keyword id="KW-0488">Methylation</keyword>
<keyword id="KW-0636">Prenylation</keyword>
<keyword id="KW-1185">Reference proteome</keyword>
<keyword id="KW-0677">Repeat</keyword>
<name>HIP17_ARATH</name>
<accession>Q9FVS0</accession>
<evidence type="ECO:0000250" key="1">
    <source>
        <dbReference type="UniProtKB" id="Q9LZF1"/>
    </source>
</evidence>
<evidence type="ECO:0000250" key="2">
    <source>
        <dbReference type="UniProtKB" id="Q9SZN7"/>
    </source>
</evidence>
<evidence type="ECO:0000255" key="3"/>
<evidence type="ECO:0000255" key="4">
    <source>
        <dbReference type="PROSITE-ProRule" id="PRU00280"/>
    </source>
</evidence>
<evidence type="ECO:0000303" key="5">
    <source>
    </source>
</evidence>
<evidence type="ECO:0000303" key="6">
    <source>
    </source>
</evidence>
<evidence type="ECO:0000305" key="7"/>
<evidence type="ECO:0000305" key="8">
    <source>
    </source>
</evidence>
<evidence type="ECO:0000312" key="9">
    <source>
        <dbReference type="Araport" id="AT1G57780"/>
    </source>
</evidence>
<evidence type="ECO:0000312" key="10">
    <source>
        <dbReference type="EMBL" id="AAG29232.1"/>
    </source>
</evidence>